<feature type="chain" id="PRO_0000168972" description="Uncharacterized oxidoreductase YdgJ">
    <location>
        <begin position="1"/>
        <end position="346"/>
    </location>
</feature>
<reference key="1">
    <citation type="journal article" date="1996" name="DNA Res.">
        <title>A 570-kb DNA sequence of the Escherichia coli K-12 genome corresponding to the 28.0-40.1 min region on the linkage map.</title>
        <authorList>
            <person name="Aiba H."/>
            <person name="Baba T."/>
            <person name="Fujita K."/>
            <person name="Hayashi K."/>
            <person name="Inada T."/>
            <person name="Isono K."/>
            <person name="Itoh T."/>
            <person name="Kasai H."/>
            <person name="Kashimoto K."/>
            <person name="Kimura S."/>
            <person name="Kitakawa M."/>
            <person name="Kitagawa M."/>
            <person name="Makino K."/>
            <person name="Miki T."/>
            <person name="Mizobuchi K."/>
            <person name="Mori H."/>
            <person name="Mori T."/>
            <person name="Motomura K."/>
            <person name="Nakade S."/>
            <person name="Nakamura Y."/>
            <person name="Nashimoto H."/>
            <person name="Nishio Y."/>
            <person name="Oshima T."/>
            <person name="Saito N."/>
            <person name="Sampei G."/>
            <person name="Seki Y."/>
            <person name="Sivasundaram S."/>
            <person name="Tagami H."/>
            <person name="Takeda J."/>
            <person name="Takemoto K."/>
            <person name="Takeuchi Y."/>
            <person name="Wada C."/>
            <person name="Yamamoto Y."/>
            <person name="Horiuchi T."/>
        </authorList>
    </citation>
    <scope>NUCLEOTIDE SEQUENCE [LARGE SCALE GENOMIC DNA]</scope>
    <source>
        <strain>K12 / W3110 / ATCC 27325 / DSM 5911</strain>
    </source>
</reference>
<reference key="2">
    <citation type="journal article" date="1997" name="Science">
        <title>The complete genome sequence of Escherichia coli K-12.</title>
        <authorList>
            <person name="Blattner F.R."/>
            <person name="Plunkett G. III"/>
            <person name="Bloch C.A."/>
            <person name="Perna N.T."/>
            <person name="Burland V."/>
            <person name="Riley M."/>
            <person name="Collado-Vides J."/>
            <person name="Glasner J.D."/>
            <person name="Rode C.K."/>
            <person name="Mayhew G.F."/>
            <person name="Gregor J."/>
            <person name="Davis N.W."/>
            <person name="Kirkpatrick H.A."/>
            <person name="Goeden M.A."/>
            <person name="Rose D.J."/>
            <person name="Mau B."/>
            <person name="Shao Y."/>
        </authorList>
    </citation>
    <scope>NUCLEOTIDE SEQUENCE [LARGE SCALE GENOMIC DNA]</scope>
    <source>
        <strain>K12 / MG1655 / ATCC 47076</strain>
    </source>
</reference>
<reference key="3">
    <citation type="journal article" date="2006" name="Mol. Syst. Biol.">
        <title>Highly accurate genome sequences of Escherichia coli K-12 strains MG1655 and W3110.</title>
        <authorList>
            <person name="Hayashi K."/>
            <person name="Morooka N."/>
            <person name="Yamamoto Y."/>
            <person name="Fujita K."/>
            <person name="Isono K."/>
            <person name="Choi S."/>
            <person name="Ohtsubo E."/>
            <person name="Baba T."/>
            <person name="Wanner B.L."/>
            <person name="Mori H."/>
            <person name="Horiuchi T."/>
        </authorList>
    </citation>
    <scope>NUCLEOTIDE SEQUENCE [LARGE SCALE GENOMIC DNA]</scope>
    <source>
        <strain>K12 / W3110 / ATCC 27325 / DSM 5911</strain>
    </source>
</reference>
<gene>
    <name type="primary">ydgJ</name>
    <name type="ordered locus">b1624</name>
    <name type="ordered locus">JW5265</name>
</gene>
<protein>
    <recommendedName>
        <fullName>Uncharacterized oxidoreductase YdgJ</fullName>
        <ecNumber>1.-.-.-</ecNumber>
    </recommendedName>
</protein>
<keyword id="KW-0560">Oxidoreductase</keyword>
<keyword id="KW-1185">Reference proteome</keyword>
<proteinExistence type="evidence at protein level"/>
<comment type="interaction">
    <interactant intactId="EBI-544796">
        <id>P77376</id>
    </interactant>
    <interactant intactId="EBI-544459">
        <id>P75960</id>
        <label>cobB</label>
    </interactant>
    <organismsDiffer>false</organismsDiffer>
    <experiments>2</experiments>
</comment>
<comment type="similarity">
    <text evidence="1">Belongs to the Gfo/Idh/MocA family.</text>
</comment>
<accession>P77376</accession>
<organism>
    <name type="scientific">Escherichia coli (strain K12)</name>
    <dbReference type="NCBI Taxonomy" id="83333"/>
    <lineage>
        <taxon>Bacteria</taxon>
        <taxon>Pseudomonadati</taxon>
        <taxon>Pseudomonadota</taxon>
        <taxon>Gammaproteobacteria</taxon>
        <taxon>Enterobacterales</taxon>
        <taxon>Enterobacteriaceae</taxon>
        <taxon>Escherichia</taxon>
    </lineage>
</organism>
<name>YDGJ_ECOLI</name>
<sequence>MSDNIRVGLIGYGYASKTFHAPLIAGTPGQELAVISSSDETKVKADWPTVTVVSEPKHLFNDPNIDLIVIPTPNDTHFPLAKAALEAGKHVVVDKPFTVTLSQARELDALAKSLGRVLSVFHNRRWDSDFLTLKGLLAEGVLGEVAYFESHFDRFRPQVRDRWREQGGPGSGIWYDLAPHLLDQAITLFGLPVSMTVDLAQLRPGAQSTDYFHAILSYPQRRVILHGTMLAAAESARYIVHGSRGSYVKYGLDPQEERLKNGERLPQEDWGYDMRDGVLTRVEGEERVEETLLTVPGNYPAYYAAIRDALNGDGENPVPASQAIQVMELIELGIESAKHRATLCLA</sequence>
<evidence type="ECO:0000305" key="1"/>
<dbReference type="EC" id="1.-.-.-"/>
<dbReference type="EMBL" id="U00096">
    <property type="protein sequence ID" value="AAC74696.2"/>
    <property type="molecule type" value="Genomic_DNA"/>
</dbReference>
<dbReference type="EMBL" id="AP009048">
    <property type="protein sequence ID" value="BAA15375.2"/>
    <property type="molecule type" value="Genomic_DNA"/>
</dbReference>
<dbReference type="PIR" id="B64919">
    <property type="entry name" value="B64919"/>
</dbReference>
<dbReference type="RefSeq" id="NP_416141.4">
    <property type="nucleotide sequence ID" value="NC_000913.3"/>
</dbReference>
<dbReference type="RefSeq" id="WP_001282550.1">
    <property type="nucleotide sequence ID" value="NZ_LN832404.1"/>
</dbReference>
<dbReference type="SMR" id="P77376"/>
<dbReference type="BioGRID" id="4259632">
    <property type="interactions" value="22"/>
</dbReference>
<dbReference type="BioGRID" id="851496">
    <property type="interactions" value="1"/>
</dbReference>
<dbReference type="DIP" id="DIP-11718N"/>
<dbReference type="FunCoup" id="P77376">
    <property type="interactions" value="241"/>
</dbReference>
<dbReference type="IntAct" id="P77376">
    <property type="interactions" value="4"/>
</dbReference>
<dbReference type="STRING" id="511145.b1624"/>
<dbReference type="jPOST" id="P77376"/>
<dbReference type="PaxDb" id="511145-b1624"/>
<dbReference type="EnsemblBacteria" id="AAC74696">
    <property type="protein sequence ID" value="AAC74696"/>
    <property type="gene ID" value="b1624"/>
</dbReference>
<dbReference type="GeneID" id="947164"/>
<dbReference type="KEGG" id="ecj:JW5265"/>
<dbReference type="KEGG" id="eco:b1624"/>
<dbReference type="KEGG" id="ecoc:C3026_09335"/>
<dbReference type="PATRIC" id="fig|1411691.4.peg.637"/>
<dbReference type="EchoBASE" id="EB3690"/>
<dbReference type="eggNOG" id="COG0673">
    <property type="taxonomic scope" value="Bacteria"/>
</dbReference>
<dbReference type="HOGENOM" id="CLU_023194_19_1_6"/>
<dbReference type="InParanoid" id="P77376"/>
<dbReference type="OMA" id="RFERWRP"/>
<dbReference type="OrthoDB" id="9774191at2"/>
<dbReference type="PhylomeDB" id="P77376"/>
<dbReference type="BioCyc" id="EcoCyc:G6868-MONOMER"/>
<dbReference type="PRO" id="PR:P77376"/>
<dbReference type="Proteomes" id="UP000000625">
    <property type="component" value="Chromosome"/>
</dbReference>
<dbReference type="GO" id="GO:0005829">
    <property type="term" value="C:cytosol"/>
    <property type="evidence" value="ECO:0000318"/>
    <property type="project" value="GO_Central"/>
</dbReference>
<dbReference type="GO" id="GO:0000166">
    <property type="term" value="F:nucleotide binding"/>
    <property type="evidence" value="ECO:0007669"/>
    <property type="project" value="InterPro"/>
</dbReference>
<dbReference type="GO" id="GO:0102497">
    <property type="term" value="F:scyllo-inositol dehydrogenase (NADP+) activity"/>
    <property type="evidence" value="ECO:0000318"/>
    <property type="project" value="GO_Central"/>
</dbReference>
<dbReference type="GO" id="GO:0017000">
    <property type="term" value="P:antibiotic biosynthetic process"/>
    <property type="evidence" value="ECO:0000318"/>
    <property type="project" value="GO_Central"/>
</dbReference>
<dbReference type="Gene3D" id="3.30.360.10">
    <property type="entry name" value="Dihydrodipicolinate Reductase, domain 2"/>
    <property type="match status" value="1"/>
</dbReference>
<dbReference type="Gene3D" id="3.40.50.720">
    <property type="entry name" value="NAD(P)-binding Rossmann-like Domain"/>
    <property type="match status" value="1"/>
</dbReference>
<dbReference type="InterPro" id="IPR004104">
    <property type="entry name" value="Gfo/Idh/MocA-like_OxRdtase_C"/>
</dbReference>
<dbReference type="InterPro" id="IPR000683">
    <property type="entry name" value="Gfo/Idh/MocA-like_OxRdtase_N"/>
</dbReference>
<dbReference type="InterPro" id="IPR051317">
    <property type="entry name" value="Gfo/Idh/MocA_oxidoreduct"/>
</dbReference>
<dbReference type="InterPro" id="IPR036291">
    <property type="entry name" value="NAD(P)-bd_dom_sf"/>
</dbReference>
<dbReference type="NCBIfam" id="NF008607">
    <property type="entry name" value="PRK11579.1"/>
    <property type="match status" value="1"/>
</dbReference>
<dbReference type="PANTHER" id="PTHR43708">
    <property type="entry name" value="CONSERVED EXPRESSED OXIDOREDUCTASE (EUROFUNG)"/>
    <property type="match status" value="1"/>
</dbReference>
<dbReference type="PANTHER" id="PTHR43708:SF5">
    <property type="entry name" value="CONSERVED EXPRESSED OXIDOREDUCTASE (EUROFUNG)-RELATED"/>
    <property type="match status" value="1"/>
</dbReference>
<dbReference type="Pfam" id="PF01408">
    <property type="entry name" value="GFO_IDH_MocA"/>
    <property type="match status" value="1"/>
</dbReference>
<dbReference type="Pfam" id="PF02894">
    <property type="entry name" value="GFO_IDH_MocA_C"/>
    <property type="match status" value="1"/>
</dbReference>
<dbReference type="SUPFAM" id="SSF51735">
    <property type="entry name" value="NAD(P)-binding Rossmann-fold domains"/>
    <property type="match status" value="1"/>
</dbReference>